<organism>
    <name type="scientific">Anaerotignum propionicum</name>
    <name type="common">Clostridium propionicum</name>
    <dbReference type="NCBI Taxonomy" id="28446"/>
    <lineage>
        <taxon>Bacteria</taxon>
        <taxon>Bacillati</taxon>
        <taxon>Bacillota</taxon>
        <taxon>Clostridia</taxon>
        <taxon>Lachnospirales</taxon>
        <taxon>Anaerotignaceae</taxon>
        <taxon>Anaerotignum</taxon>
    </lineage>
</organism>
<sequence length="374" mass="41810">MSRVEAILSQLKDVAANPKKAMDDYKAETGKGAVGIMPIYSPEEMVHAAGYLPMGIWGAQGKTISKARTYLPAFACSVMQQVMELQCEGAYDDLSAVIFSVPCDTLKCLSQKWKGTSPVIVFTHPQNRGLEAANQFLVTEYELVKAQLESVLGVKISNAALENSIAIYNENRAVMREFVKVAADYPQVIDAVSRHAVFKARQFMLKEKHTALVKELIAEIKATPVQPWDGKKVVVTGILLEPNELLDIFNEFKIAIVDDDLAQESRQIRVDVLDGEGGPLYRMAKAWQQMYGCSLATDTKKGRGRMLINKTIQTGADAIVVAMMKFCDPEEWDYPVMYREFEEKGVKSLMIEVDQEVSSFEQIKTRLQSFVEML</sequence>
<proteinExistence type="evidence at protein level"/>
<gene>
    <name type="primary">lcdB</name>
</gene>
<feature type="chain" id="PRO_0000419610" description="Lactoyl-CoA dehydratase subunit beta">
    <location>
        <begin position="1" status="less than"/>
        <end position="374"/>
    </location>
</feature>
<feature type="non-terminal residue">
    <location>
        <position position="1"/>
    </location>
</feature>
<protein>
    <recommendedName>
        <fullName>Lactoyl-CoA dehydratase subunit beta</fullName>
        <ecNumber>4.2.1.54</ecNumber>
    </recommendedName>
    <alternativeName>
        <fullName>(R)-lactyl-CoA dehydratase component E II</fullName>
    </alternativeName>
    <alternativeName>
        <fullName>2-hydroxybutyroyl-CoA dehydratase</fullName>
    </alternativeName>
</protein>
<dbReference type="EC" id="4.2.1.54"/>
<dbReference type="EMBL" id="JN244651">
    <property type="protein sequence ID" value="AEM62993.1"/>
    <property type="molecule type" value="Genomic_DNA"/>
</dbReference>
<dbReference type="RefSeq" id="WP_066048114.1">
    <property type="nucleotide sequence ID" value="NZ_JAYFOE010000006.1"/>
</dbReference>
<dbReference type="SMR" id="G3KIM3"/>
<dbReference type="KEGG" id="ag:AEM62993"/>
<dbReference type="BioCyc" id="MetaCyc:BETALAC-MONOMER"/>
<dbReference type="GO" id="GO:0051539">
    <property type="term" value="F:4 iron, 4 sulfur cluster binding"/>
    <property type="evidence" value="ECO:0007669"/>
    <property type="project" value="UniProtKB-KW"/>
</dbReference>
<dbReference type="GO" id="GO:0018819">
    <property type="term" value="F:lactoyl-CoA dehydratase activity"/>
    <property type="evidence" value="ECO:0000314"/>
    <property type="project" value="UniProtKB"/>
</dbReference>
<dbReference type="GO" id="GO:0046872">
    <property type="term" value="F:metal ion binding"/>
    <property type="evidence" value="ECO:0007669"/>
    <property type="project" value="UniProtKB-KW"/>
</dbReference>
<dbReference type="Gene3D" id="1.20.1270.370">
    <property type="match status" value="1"/>
</dbReference>
<dbReference type="Gene3D" id="3.40.50.11890">
    <property type="match status" value="1"/>
</dbReference>
<dbReference type="Gene3D" id="3.40.50.11900">
    <property type="match status" value="1"/>
</dbReference>
<dbReference type="InterPro" id="IPR010327">
    <property type="entry name" value="FldB/FldC_alpha/beta"/>
</dbReference>
<dbReference type="PANTHER" id="PTHR30548">
    <property type="entry name" value="2-HYDROXYGLUTARYL-COA DEHYDRATASE, D-COMPONENT-RELATED"/>
    <property type="match status" value="1"/>
</dbReference>
<dbReference type="PANTHER" id="PTHR30548:SF5">
    <property type="entry name" value="SUBUNIT OF OXYGEN-SENSITIVE 2-HYDROXYISOCAPROYL-COA DEHYDRATASE"/>
    <property type="match status" value="1"/>
</dbReference>
<dbReference type="Pfam" id="PF06050">
    <property type="entry name" value="HGD-D"/>
    <property type="match status" value="1"/>
</dbReference>
<comment type="function">
    <text evidence="1 2 3">Involved in the acrylate pathway for the conversion of D-lactic acid to propionic acid. Catalyzes the reversible dehydration of Lactoyl-CoA and 2-hydroxybutyroyl-CoA to acryloyl-CoA and crotonyl-CoA, respectively.</text>
</comment>
<comment type="catalytic activity">
    <reaction>
        <text>(R)-lactoyl-CoA = acryloyl-CoA + H2O</text>
        <dbReference type="Rhea" id="RHEA:34691"/>
        <dbReference type="ChEBI" id="CHEBI:15377"/>
        <dbReference type="ChEBI" id="CHEBI:57367"/>
        <dbReference type="ChEBI" id="CHEBI:70980"/>
        <dbReference type="EC" id="4.2.1.54"/>
    </reaction>
</comment>
<comment type="catalytic activity">
    <reaction>
        <text>(2R)-hydroxybutanoyl-CoA = (2E)-butenoyl-CoA + H2O</text>
        <dbReference type="Rhea" id="RHEA:47176"/>
        <dbReference type="ChEBI" id="CHEBI:15377"/>
        <dbReference type="ChEBI" id="CHEBI:57332"/>
        <dbReference type="ChEBI" id="CHEBI:87474"/>
    </reaction>
</comment>
<comment type="cofactor">
    <cofactor>
        <name>[4Fe-4S] cluster</name>
        <dbReference type="ChEBI" id="CHEBI:49883"/>
    </cofactor>
    <text>Binds 1 [4Fe-4S] cluster.</text>
</comment>
<comment type="cofactor">
    <cofactor>
        <name>FMN</name>
        <dbReference type="ChEBI" id="CHEBI:58210"/>
    </cofactor>
</comment>
<comment type="cofactor">
    <cofactor>
        <name>riboflavin</name>
        <dbReference type="ChEBI" id="CHEBI:57986"/>
    </cofactor>
</comment>
<comment type="cofactor">
    <cofactor>
        <name>Mg(2+)</name>
        <dbReference type="ChEBI" id="CHEBI:18420"/>
    </cofactor>
</comment>
<comment type="activity regulation">
    <text>Activated by the LcdC protein.</text>
</comment>
<comment type="subunit">
    <text evidence="1 3">Heterodimer of an alpha (LcdA) and a beta (LcdB) subunit.</text>
</comment>
<comment type="miscellaneous">
    <text>The elimination of water from 2-hydroxybutyryl-CoA or lactoyl-CoA occurs in a syn mode.</text>
</comment>
<comment type="similarity">
    <text evidence="4">Belongs to the FldB/FldC dehydratase alpha/beta subunit family.</text>
</comment>
<name>LCDB_ANAPI</name>
<reference key="1">
    <citation type="submission" date="2011-07" db="EMBL/GenBank/DDBJ databases">
        <authorList>
            <person name="Poehlein A."/>
            <person name="Schlien K."/>
            <person name="Daniel R."/>
            <person name="Gottschalk G."/>
            <person name="Buckel W."/>
        </authorList>
    </citation>
    <scope>NUCLEOTIDE SEQUENCE [GENOMIC DNA]</scope>
    <source>
        <strain>ATCC 25522 / DSM 1682 / JCM 1430 / NCIMB 10656 / VPI 5303 / X2</strain>
    </source>
</reference>
<reference key="2">
    <citation type="journal article" date="1985" name="J. Biol. Chem.">
        <title>Lactate reduction in Clostridium propionicum. Purification and properties of lactyl-CoA dehydratase.</title>
        <authorList>
            <person name="Kuchta R.D."/>
            <person name="Abeles R.H."/>
        </authorList>
    </citation>
    <scope>FUNCTION</scope>
    <scope>COFACTOR</scope>
    <scope>SUBUNIT</scope>
</reference>
<reference key="3">
    <citation type="journal article" date="1992" name="Eur. J. Biochem.">
        <title>(R)-lactyl-CoA dehydratase from Clostridium propionicum. Stereochemistry of the dehydration of (R)-2-hydroxybutyryl-CoA to crotonyl-CoA.</title>
        <authorList>
            <person name="Hofmeister A.E."/>
            <person name="Buckel W."/>
        </authorList>
    </citation>
    <scope>FUNCTION</scope>
    <scope>COFACTOR</scope>
    <scope>SUBUNIT</scope>
</reference>
<reference key="4">
    <citation type="journal article" date="2013" name="Appl. Microbiol. Biotechnol.">
        <title>Engineering Escherichia coli with acrylate pathway genes for propionic acid synthesis and its impact on mixed-acid fermentation.</title>
        <authorList>
            <person name="Kandasamy V."/>
            <person name="Vaidyanathan H."/>
            <person name="Djurdjevic I."/>
            <person name="Jayamani E."/>
            <person name="Ramachandran K.B."/>
            <person name="Buckel W."/>
            <person name="Jayaraman G."/>
            <person name="Ramalingam S."/>
        </authorList>
    </citation>
    <scope>FUNCTION IN THE ACRYLATE PATHWAY</scope>
</reference>
<accession>G3KIM3</accession>
<keyword id="KW-0004">4Fe-4S</keyword>
<keyword id="KW-0285">Flavoprotein</keyword>
<keyword id="KW-0288">FMN</keyword>
<keyword id="KW-0408">Iron</keyword>
<keyword id="KW-0411">Iron-sulfur</keyword>
<keyword id="KW-0456">Lyase</keyword>
<keyword id="KW-0479">Metal-binding</keyword>
<evidence type="ECO:0000269" key="1">
    <source>
    </source>
</evidence>
<evidence type="ECO:0000269" key="2">
    <source>
    </source>
</evidence>
<evidence type="ECO:0000269" key="3">
    <source>
    </source>
</evidence>
<evidence type="ECO:0000305" key="4"/>